<accession>Q668J9</accession>
<name>NANK_YERPS</name>
<feature type="chain" id="PRO_0000095708" description="N-acetylmannosamine kinase">
    <location>
        <begin position="1"/>
        <end position="290"/>
    </location>
</feature>
<feature type="binding site" evidence="1">
    <location>
        <begin position="6"/>
        <end position="13"/>
    </location>
    <ligand>
        <name>ATP</name>
        <dbReference type="ChEBI" id="CHEBI:30616"/>
    </ligand>
</feature>
<feature type="binding site" evidence="1">
    <location>
        <begin position="132"/>
        <end position="139"/>
    </location>
    <ligand>
        <name>ATP</name>
        <dbReference type="ChEBI" id="CHEBI:30616"/>
    </ligand>
</feature>
<feature type="binding site" evidence="1">
    <location>
        <position position="156"/>
    </location>
    <ligand>
        <name>Zn(2+)</name>
        <dbReference type="ChEBI" id="CHEBI:29105"/>
    </ligand>
</feature>
<feature type="binding site" evidence="1">
    <location>
        <position position="166"/>
    </location>
    <ligand>
        <name>Zn(2+)</name>
        <dbReference type="ChEBI" id="CHEBI:29105"/>
    </ligand>
</feature>
<feature type="binding site" evidence="1">
    <location>
        <position position="168"/>
    </location>
    <ligand>
        <name>Zn(2+)</name>
        <dbReference type="ChEBI" id="CHEBI:29105"/>
    </ligand>
</feature>
<feature type="binding site" evidence="1">
    <location>
        <position position="173"/>
    </location>
    <ligand>
        <name>Zn(2+)</name>
        <dbReference type="ChEBI" id="CHEBI:29105"/>
    </ligand>
</feature>
<evidence type="ECO:0000255" key="1">
    <source>
        <dbReference type="HAMAP-Rule" id="MF_01234"/>
    </source>
</evidence>
<proteinExistence type="inferred from homology"/>
<keyword id="KW-0067">ATP-binding</keyword>
<keyword id="KW-0119">Carbohydrate metabolism</keyword>
<keyword id="KW-0418">Kinase</keyword>
<keyword id="KW-0479">Metal-binding</keyword>
<keyword id="KW-0547">Nucleotide-binding</keyword>
<keyword id="KW-0808">Transferase</keyword>
<keyword id="KW-0862">Zinc</keyword>
<reference key="1">
    <citation type="journal article" date="2004" name="Proc. Natl. Acad. Sci. U.S.A.">
        <title>Insights into the evolution of Yersinia pestis through whole-genome comparison with Yersinia pseudotuberculosis.</title>
        <authorList>
            <person name="Chain P.S.G."/>
            <person name="Carniel E."/>
            <person name="Larimer F.W."/>
            <person name="Lamerdin J."/>
            <person name="Stoutland P.O."/>
            <person name="Regala W.M."/>
            <person name="Georgescu A.M."/>
            <person name="Vergez L.M."/>
            <person name="Land M.L."/>
            <person name="Motin V.L."/>
            <person name="Brubaker R.R."/>
            <person name="Fowler J."/>
            <person name="Hinnebusch J."/>
            <person name="Marceau M."/>
            <person name="Medigue C."/>
            <person name="Simonet M."/>
            <person name="Chenal-Francisque V."/>
            <person name="Souza B."/>
            <person name="Dacheux D."/>
            <person name="Elliott J.M."/>
            <person name="Derbise A."/>
            <person name="Hauser L.J."/>
            <person name="Garcia E."/>
        </authorList>
    </citation>
    <scope>NUCLEOTIDE SEQUENCE [LARGE SCALE GENOMIC DNA]</scope>
    <source>
        <strain>IP32953</strain>
    </source>
</reference>
<organism>
    <name type="scientific">Yersinia pseudotuberculosis serotype I (strain IP32953)</name>
    <dbReference type="NCBI Taxonomy" id="273123"/>
    <lineage>
        <taxon>Bacteria</taxon>
        <taxon>Pseudomonadati</taxon>
        <taxon>Pseudomonadota</taxon>
        <taxon>Gammaproteobacteria</taxon>
        <taxon>Enterobacterales</taxon>
        <taxon>Yersiniaceae</taxon>
        <taxon>Yersinia</taxon>
    </lineage>
</organism>
<sequence>MGKGLALDIGGTKIAAAVVTESGMLIGRQQIATPRGGAGQLAAALETLIAPYRHQVDFIAVASTGIISGGRLTALNPANLGGLADFPLYDCIRSISDLPCVLLNDGQAAAWAEYQALGDKNDNMMFVTVSTGVGGGIILNKKLLVGQRGLAGHIGHTLSDPHGVLCGCGRRGCVESVASGTAIGAETLGWKQPVSAATVFDMAQQGDAQAGKVINRSAAAIAQMLADMKMALDLEVVILGGSVGLAVGYLERVVAAQKTLPGIYRVPVQEAHHRQDSGLLGAALWARTSL</sequence>
<gene>
    <name evidence="1" type="primary">nanK</name>
    <name type="ordered locus">YPTB2739</name>
</gene>
<dbReference type="EC" id="2.7.1.60" evidence="1"/>
<dbReference type="EMBL" id="BX936398">
    <property type="protein sequence ID" value="CAH21977.1"/>
    <property type="molecule type" value="Genomic_DNA"/>
</dbReference>
<dbReference type="RefSeq" id="WP_002208516.1">
    <property type="nucleotide sequence ID" value="NZ_CP009712.1"/>
</dbReference>
<dbReference type="SMR" id="Q668J9"/>
<dbReference type="KEGG" id="ypo:BZ17_3890"/>
<dbReference type="KEGG" id="yps:YPTB2739"/>
<dbReference type="PATRIC" id="fig|273123.14.peg.4090"/>
<dbReference type="UniPathway" id="UPA00629">
    <property type="reaction ID" value="UER00681"/>
</dbReference>
<dbReference type="Proteomes" id="UP000001011">
    <property type="component" value="Chromosome"/>
</dbReference>
<dbReference type="GO" id="GO:0005524">
    <property type="term" value="F:ATP binding"/>
    <property type="evidence" value="ECO:0007669"/>
    <property type="project" value="UniProtKB-UniRule"/>
</dbReference>
<dbReference type="GO" id="GO:0009384">
    <property type="term" value="F:N-acylmannosamine kinase activity"/>
    <property type="evidence" value="ECO:0007669"/>
    <property type="project" value="UniProtKB-UniRule"/>
</dbReference>
<dbReference type="GO" id="GO:0008270">
    <property type="term" value="F:zinc ion binding"/>
    <property type="evidence" value="ECO:0007669"/>
    <property type="project" value="UniProtKB-UniRule"/>
</dbReference>
<dbReference type="GO" id="GO:0019262">
    <property type="term" value="P:N-acetylneuraminate catabolic process"/>
    <property type="evidence" value="ECO:0007669"/>
    <property type="project" value="UniProtKB-UniRule"/>
</dbReference>
<dbReference type="CDD" id="cd24069">
    <property type="entry name" value="ASKHA_NBD_ROK_EcNanK-like"/>
    <property type="match status" value="1"/>
</dbReference>
<dbReference type="FunFam" id="3.30.420.40:FF:000063">
    <property type="entry name" value="N-acetylmannosamine kinase"/>
    <property type="match status" value="1"/>
</dbReference>
<dbReference type="Gene3D" id="3.30.420.40">
    <property type="match status" value="2"/>
</dbReference>
<dbReference type="HAMAP" id="MF_01234">
    <property type="entry name" value="ManNAc_kinase"/>
    <property type="match status" value="1"/>
</dbReference>
<dbReference type="InterPro" id="IPR043129">
    <property type="entry name" value="ATPase_NBD"/>
</dbReference>
<dbReference type="InterPro" id="IPR023945">
    <property type="entry name" value="ManNAc_kinase_bac"/>
</dbReference>
<dbReference type="InterPro" id="IPR000600">
    <property type="entry name" value="ROK"/>
</dbReference>
<dbReference type="InterPro" id="IPR049874">
    <property type="entry name" value="ROK_cs"/>
</dbReference>
<dbReference type="NCBIfam" id="NF003461">
    <property type="entry name" value="PRK05082.1"/>
    <property type="match status" value="1"/>
</dbReference>
<dbReference type="PANTHER" id="PTHR18964:SF169">
    <property type="entry name" value="N-ACETYLMANNOSAMINE KINASE"/>
    <property type="match status" value="1"/>
</dbReference>
<dbReference type="PANTHER" id="PTHR18964">
    <property type="entry name" value="ROK (REPRESSOR, ORF, KINASE) FAMILY"/>
    <property type="match status" value="1"/>
</dbReference>
<dbReference type="Pfam" id="PF00480">
    <property type="entry name" value="ROK"/>
    <property type="match status" value="1"/>
</dbReference>
<dbReference type="SUPFAM" id="SSF53067">
    <property type="entry name" value="Actin-like ATPase domain"/>
    <property type="match status" value="1"/>
</dbReference>
<dbReference type="PROSITE" id="PS01125">
    <property type="entry name" value="ROK"/>
    <property type="match status" value="1"/>
</dbReference>
<protein>
    <recommendedName>
        <fullName evidence="1">N-acetylmannosamine kinase</fullName>
        <ecNumber evidence="1">2.7.1.60</ecNumber>
    </recommendedName>
    <alternativeName>
        <fullName evidence="1">ManNAc kinase</fullName>
    </alternativeName>
    <alternativeName>
        <fullName evidence="1">N-acetyl-D-mannosamine kinase</fullName>
    </alternativeName>
</protein>
<comment type="function">
    <text evidence="1">Catalyzes the phosphorylation of N-acetylmannosamine (ManNAc) to ManNAc-6-P.</text>
</comment>
<comment type="catalytic activity">
    <reaction evidence="1">
        <text>an N-acyl-D-mannosamine + ATP = an N-acyl-D-mannosamine 6-phosphate + ADP + H(+)</text>
        <dbReference type="Rhea" id="RHEA:23832"/>
        <dbReference type="ChEBI" id="CHEBI:15378"/>
        <dbReference type="ChEBI" id="CHEBI:16062"/>
        <dbReference type="ChEBI" id="CHEBI:30616"/>
        <dbReference type="ChEBI" id="CHEBI:57666"/>
        <dbReference type="ChEBI" id="CHEBI:456216"/>
        <dbReference type="EC" id="2.7.1.60"/>
    </reaction>
</comment>
<comment type="pathway">
    <text evidence="1">Amino-sugar metabolism; N-acetylneuraminate degradation; D-fructose 6-phosphate from N-acetylneuraminate: step 2/5.</text>
</comment>
<comment type="subunit">
    <text evidence="1">Homodimer.</text>
</comment>
<comment type="similarity">
    <text evidence="1">Belongs to the ROK (NagC/XylR) family. NanK subfamily.</text>
</comment>